<gene>
    <name evidence="2" type="primary">infB</name>
    <name type="ordered locus">Arth_1416</name>
</gene>
<dbReference type="EMBL" id="CP000454">
    <property type="protein sequence ID" value="ABK02810.1"/>
    <property type="molecule type" value="Genomic_DNA"/>
</dbReference>
<dbReference type="RefSeq" id="WP_011691277.1">
    <property type="nucleotide sequence ID" value="NC_008541.1"/>
</dbReference>
<dbReference type="SMR" id="A0JUU0"/>
<dbReference type="STRING" id="290399.Arth_1416"/>
<dbReference type="KEGG" id="art:Arth_1416"/>
<dbReference type="eggNOG" id="COG0532">
    <property type="taxonomic scope" value="Bacteria"/>
</dbReference>
<dbReference type="HOGENOM" id="CLU_006301_9_1_11"/>
<dbReference type="OrthoDB" id="9811804at2"/>
<dbReference type="Proteomes" id="UP000000754">
    <property type="component" value="Chromosome"/>
</dbReference>
<dbReference type="GO" id="GO:0005829">
    <property type="term" value="C:cytosol"/>
    <property type="evidence" value="ECO:0007669"/>
    <property type="project" value="TreeGrafter"/>
</dbReference>
<dbReference type="GO" id="GO:0005525">
    <property type="term" value="F:GTP binding"/>
    <property type="evidence" value="ECO:0007669"/>
    <property type="project" value="UniProtKB-KW"/>
</dbReference>
<dbReference type="GO" id="GO:0003924">
    <property type="term" value="F:GTPase activity"/>
    <property type="evidence" value="ECO:0007669"/>
    <property type="project" value="UniProtKB-UniRule"/>
</dbReference>
<dbReference type="GO" id="GO:0003743">
    <property type="term" value="F:translation initiation factor activity"/>
    <property type="evidence" value="ECO:0007669"/>
    <property type="project" value="UniProtKB-UniRule"/>
</dbReference>
<dbReference type="CDD" id="cd01887">
    <property type="entry name" value="IF2_eIF5B"/>
    <property type="match status" value="1"/>
</dbReference>
<dbReference type="CDD" id="cd03702">
    <property type="entry name" value="IF2_mtIF2_II"/>
    <property type="match status" value="1"/>
</dbReference>
<dbReference type="CDD" id="cd03692">
    <property type="entry name" value="mtIF2_IVc"/>
    <property type="match status" value="1"/>
</dbReference>
<dbReference type="FunFam" id="1.10.10.2480:FF:000003">
    <property type="entry name" value="Translation initiation factor IF-2"/>
    <property type="match status" value="1"/>
</dbReference>
<dbReference type="FunFam" id="2.40.30.10:FF:000007">
    <property type="entry name" value="Translation initiation factor IF-2"/>
    <property type="match status" value="1"/>
</dbReference>
<dbReference type="FunFam" id="2.40.30.10:FF:000008">
    <property type="entry name" value="Translation initiation factor IF-2"/>
    <property type="match status" value="1"/>
</dbReference>
<dbReference type="FunFam" id="3.40.50.10050:FF:000001">
    <property type="entry name" value="Translation initiation factor IF-2"/>
    <property type="match status" value="1"/>
</dbReference>
<dbReference type="FunFam" id="3.40.50.300:FF:000019">
    <property type="entry name" value="Translation initiation factor IF-2"/>
    <property type="match status" value="1"/>
</dbReference>
<dbReference type="Gene3D" id="1.10.10.2480">
    <property type="match status" value="1"/>
</dbReference>
<dbReference type="Gene3D" id="3.40.50.300">
    <property type="entry name" value="P-loop containing nucleotide triphosphate hydrolases"/>
    <property type="match status" value="1"/>
</dbReference>
<dbReference type="Gene3D" id="2.40.30.10">
    <property type="entry name" value="Translation factors"/>
    <property type="match status" value="2"/>
</dbReference>
<dbReference type="Gene3D" id="3.40.50.10050">
    <property type="entry name" value="Translation initiation factor IF- 2, domain 3"/>
    <property type="match status" value="1"/>
</dbReference>
<dbReference type="HAMAP" id="MF_00100_B">
    <property type="entry name" value="IF_2_B"/>
    <property type="match status" value="1"/>
</dbReference>
<dbReference type="InterPro" id="IPR053905">
    <property type="entry name" value="EF-G-like_DII"/>
</dbReference>
<dbReference type="InterPro" id="IPR044145">
    <property type="entry name" value="IF2_II"/>
</dbReference>
<dbReference type="InterPro" id="IPR006847">
    <property type="entry name" value="IF2_N"/>
</dbReference>
<dbReference type="InterPro" id="IPR027417">
    <property type="entry name" value="P-loop_NTPase"/>
</dbReference>
<dbReference type="InterPro" id="IPR005225">
    <property type="entry name" value="Small_GTP-bd"/>
</dbReference>
<dbReference type="InterPro" id="IPR000795">
    <property type="entry name" value="T_Tr_GTP-bd_dom"/>
</dbReference>
<dbReference type="InterPro" id="IPR000178">
    <property type="entry name" value="TF_IF2_bacterial-like"/>
</dbReference>
<dbReference type="InterPro" id="IPR015760">
    <property type="entry name" value="TIF_IF2"/>
</dbReference>
<dbReference type="InterPro" id="IPR023115">
    <property type="entry name" value="TIF_IF2_dom3"/>
</dbReference>
<dbReference type="InterPro" id="IPR036925">
    <property type="entry name" value="TIF_IF2_dom3_sf"/>
</dbReference>
<dbReference type="InterPro" id="IPR009000">
    <property type="entry name" value="Transl_B-barrel_sf"/>
</dbReference>
<dbReference type="NCBIfam" id="TIGR00487">
    <property type="entry name" value="IF-2"/>
    <property type="match status" value="1"/>
</dbReference>
<dbReference type="NCBIfam" id="TIGR00231">
    <property type="entry name" value="small_GTP"/>
    <property type="match status" value="1"/>
</dbReference>
<dbReference type="PANTHER" id="PTHR43381:SF5">
    <property type="entry name" value="TR-TYPE G DOMAIN-CONTAINING PROTEIN"/>
    <property type="match status" value="1"/>
</dbReference>
<dbReference type="PANTHER" id="PTHR43381">
    <property type="entry name" value="TRANSLATION INITIATION FACTOR IF-2-RELATED"/>
    <property type="match status" value="1"/>
</dbReference>
<dbReference type="Pfam" id="PF22042">
    <property type="entry name" value="EF-G_D2"/>
    <property type="match status" value="1"/>
</dbReference>
<dbReference type="Pfam" id="PF00009">
    <property type="entry name" value="GTP_EFTU"/>
    <property type="match status" value="1"/>
</dbReference>
<dbReference type="Pfam" id="PF11987">
    <property type="entry name" value="IF-2"/>
    <property type="match status" value="1"/>
</dbReference>
<dbReference type="Pfam" id="PF04760">
    <property type="entry name" value="IF2_N"/>
    <property type="match status" value="2"/>
</dbReference>
<dbReference type="PRINTS" id="PR00315">
    <property type="entry name" value="ELONGATNFCT"/>
</dbReference>
<dbReference type="SUPFAM" id="SSF52156">
    <property type="entry name" value="Initiation factor IF2/eIF5b, domain 3"/>
    <property type="match status" value="1"/>
</dbReference>
<dbReference type="SUPFAM" id="SSF52540">
    <property type="entry name" value="P-loop containing nucleoside triphosphate hydrolases"/>
    <property type="match status" value="1"/>
</dbReference>
<dbReference type="SUPFAM" id="SSF50447">
    <property type="entry name" value="Translation proteins"/>
    <property type="match status" value="2"/>
</dbReference>
<dbReference type="PROSITE" id="PS51722">
    <property type="entry name" value="G_TR_2"/>
    <property type="match status" value="1"/>
</dbReference>
<dbReference type="PROSITE" id="PS01176">
    <property type="entry name" value="IF2"/>
    <property type="match status" value="1"/>
</dbReference>
<accession>A0JUU0</accession>
<feature type="chain" id="PRO_0000335457" description="Translation initiation factor IF-2">
    <location>
        <begin position="1"/>
        <end position="968"/>
    </location>
</feature>
<feature type="domain" description="tr-type G">
    <location>
        <begin position="461"/>
        <end position="632"/>
    </location>
</feature>
<feature type="region of interest" description="Disordered" evidence="3">
    <location>
        <begin position="51"/>
        <end position="369"/>
    </location>
</feature>
<feature type="region of interest" description="G1" evidence="1">
    <location>
        <begin position="470"/>
        <end position="477"/>
    </location>
</feature>
<feature type="region of interest" description="G2" evidence="1">
    <location>
        <begin position="495"/>
        <end position="499"/>
    </location>
</feature>
<feature type="region of interest" description="G3" evidence="1">
    <location>
        <begin position="520"/>
        <end position="523"/>
    </location>
</feature>
<feature type="region of interest" description="G4" evidence="1">
    <location>
        <begin position="574"/>
        <end position="577"/>
    </location>
</feature>
<feature type="region of interest" description="G5" evidence="1">
    <location>
        <begin position="610"/>
        <end position="612"/>
    </location>
</feature>
<feature type="compositionally biased region" description="Low complexity" evidence="3">
    <location>
        <begin position="51"/>
        <end position="76"/>
    </location>
</feature>
<feature type="compositionally biased region" description="Pro residues" evidence="3">
    <location>
        <begin position="77"/>
        <end position="87"/>
    </location>
</feature>
<feature type="compositionally biased region" description="Low complexity" evidence="3">
    <location>
        <begin position="93"/>
        <end position="102"/>
    </location>
</feature>
<feature type="compositionally biased region" description="Pro residues" evidence="3">
    <location>
        <begin position="103"/>
        <end position="112"/>
    </location>
</feature>
<feature type="compositionally biased region" description="Low complexity" evidence="3">
    <location>
        <begin position="113"/>
        <end position="122"/>
    </location>
</feature>
<feature type="compositionally biased region" description="Low complexity" evidence="3">
    <location>
        <begin position="128"/>
        <end position="170"/>
    </location>
</feature>
<feature type="compositionally biased region" description="Low complexity" evidence="3">
    <location>
        <begin position="239"/>
        <end position="254"/>
    </location>
</feature>
<feature type="compositionally biased region" description="Gly residues" evidence="3">
    <location>
        <begin position="281"/>
        <end position="336"/>
    </location>
</feature>
<feature type="compositionally biased region" description="Basic residues" evidence="3">
    <location>
        <begin position="337"/>
        <end position="346"/>
    </location>
</feature>
<feature type="binding site" evidence="2">
    <location>
        <begin position="470"/>
        <end position="477"/>
    </location>
    <ligand>
        <name>GTP</name>
        <dbReference type="ChEBI" id="CHEBI:37565"/>
    </ligand>
</feature>
<feature type="binding site" evidence="2">
    <location>
        <begin position="520"/>
        <end position="524"/>
    </location>
    <ligand>
        <name>GTP</name>
        <dbReference type="ChEBI" id="CHEBI:37565"/>
    </ligand>
</feature>
<feature type="binding site" evidence="2">
    <location>
        <begin position="574"/>
        <end position="577"/>
    </location>
    <ligand>
        <name>GTP</name>
        <dbReference type="ChEBI" id="CHEBI:37565"/>
    </ligand>
</feature>
<organism>
    <name type="scientific">Arthrobacter sp. (strain FB24)</name>
    <dbReference type="NCBI Taxonomy" id="290399"/>
    <lineage>
        <taxon>Bacteria</taxon>
        <taxon>Bacillati</taxon>
        <taxon>Actinomycetota</taxon>
        <taxon>Actinomycetes</taxon>
        <taxon>Micrococcales</taxon>
        <taxon>Micrococcaceae</taxon>
        <taxon>Arthrobacter</taxon>
    </lineage>
</organism>
<protein>
    <recommendedName>
        <fullName evidence="2">Translation initiation factor IF-2</fullName>
    </recommendedName>
</protein>
<keyword id="KW-0963">Cytoplasm</keyword>
<keyword id="KW-0342">GTP-binding</keyword>
<keyword id="KW-0396">Initiation factor</keyword>
<keyword id="KW-0547">Nucleotide-binding</keyword>
<keyword id="KW-0648">Protein biosynthesis</keyword>
<keyword id="KW-1185">Reference proteome</keyword>
<name>IF2_ARTS2</name>
<evidence type="ECO:0000250" key="1"/>
<evidence type="ECO:0000255" key="2">
    <source>
        <dbReference type="HAMAP-Rule" id="MF_00100"/>
    </source>
</evidence>
<evidence type="ECO:0000256" key="3">
    <source>
        <dbReference type="SAM" id="MobiDB-lite"/>
    </source>
</evidence>
<sequence>MAKVRVHELAKELGITSKDAVTKLQELGEFVRSASSTIEAPVVRKLRNAYPAAGASKSEAPAAAPKAPASPAATRPAPAPGPAAPKAPEPKAEAPAAASAPSAPAPAAPAPAAPAAAASAPSAPAPAAPSTGAKPGARPAPKAEAPAAPARSGGQGSAPRPGGPRPGNNPFATSQGMPRGRGGDNERPPRPGNNPFAPSQGMPRPGGSRTEGERPGGPRPAAGAGGPRPGAPRPGGTQGARPGAPRPAGAPGARPGAGGGNRPTPGMMPNRTERPAPAGAGRPGGGGRGPGRPGGAPGTGGAPGAGGGAPAGGGFGKGGRGRGGTQGAFGKGGAGRGKQRKSKRAKRQELEQMSAPSLGGVSVPRGDGNTVVRLRRGSSITDFADKIEANPAALVTVLFHLGEMATATQSLDEETFALLGEELGYKLQVVSPEDEERELLSGFDIDFDAELEAEGDEELEARPPVVTVMGHVDHGKTRLLDAIRNSDVVAGEHGGITQHIGAYQITTEHEGAERKITFIDTPGHEAFTAMRARGAKVTDIAILVVAADDGVMPQTVEALNHAQAANVPIVVAVNKIDKEGANPDKVRGQLTEYGLVPEEYGGDTMFVEVSARQNLNIDELLEAVLLTADAALDMRANPNKDARGIAIEANLDKGRGAVATVLVQSGTLHVGDTIVAGTAHGRVRAMFDDDGSVLTEAGPSRPVQVLGLSNVPRAGDTFFVTADERTARQIAEKREAADRNAALAKRRKRISLEDFDQAVAEGKIDTLNLILKGDVSGAVEALEDALLKIDVGEGVQLRVIHRGVGAITQNDVNLATVDSAVIIGFNVKPAERVAELADREGVDMRFYSVIYAAIDDIEMALKGMLKPEYEEVQLGTAEVREVFRSSKFGNIAGSIVRSGVIRRNSKARISRDGKIIGDNLTVETLKRFKDDATEVRTDFECGIGLGSYNDINEGDIIETFEMREKPRV</sequence>
<reference key="1">
    <citation type="journal article" date="2013" name="Stand. Genomic Sci.">
        <title>Complete genome sequence of Arthrobacter sp. strain FB24.</title>
        <authorList>
            <person name="Nakatsu C.H."/>
            <person name="Barabote R."/>
            <person name="Thompson S."/>
            <person name="Bruce D."/>
            <person name="Detter C."/>
            <person name="Brettin T."/>
            <person name="Han C."/>
            <person name="Beasley F."/>
            <person name="Chen W."/>
            <person name="Konopka A."/>
            <person name="Xie G."/>
        </authorList>
    </citation>
    <scope>NUCLEOTIDE SEQUENCE [LARGE SCALE GENOMIC DNA]</scope>
    <source>
        <strain>FB24</strain>
    </source>
</reference>
<proteinExistence type="inferred from homology"/>
<comment type="function">
    <text evidence="2">One of the essential components for the initiation of protein synthesis. Protects formylmethionyl-tRNA from spontaneous hydrolysis and promotes its binding to the 30S ribosomal subunits. Also involved in the hydrolysis of GTP during the formation of the 70S ribosomal complex.</text>
</comment>
<comment type="subcellular location">
    <subcellularLocation>
        <location evidence="2">Cytoplasm</location>
    </subcellularLocation>
</comment>
<comment type="similarity">
    <text evidence="2">Belongs to the TRAFAC class translation factor GTPase superfamily. Classic translation factor GTPase family. IF-2 subfamily.</text>
</comment>